<accession>Q2T3W7</accession>
<proteinExistence type="inferred from homology"/>
<protein>
    <recommendedName>
        <fullName evidence="1">Chaperonin GroEL 2</fullName>
        <ecNumber evidence="1">5.6.1.7</ecNumber>
    </recommendedName>
    <alternativeName>
        <fullName evidence="1">60 kDa chaperonin 2</fullName>
    </alternativeName>
    <alternativeName>
        <fullName evidence="1">Chaperonin-60 2</fullName>
        <shortName evidence="1">Cpn60 2</shortName>
    </alternativeName>
</protein>
<comment type="function">
    <text evidence="1">Together with its co-chaperonin GroES, plays an essential role in assisting protein folding. The GroEL-GroES system forms a nano-cage that allows encapsulation of the non-native substrate proteins and provides a physical environment optimized to promote and accelerate protein folding.</text>
</comment>
<comment type="catalytic activity">
    <reaction evidence="1">
        <text>ATP + H2O + a folded polypeptide = ADP + phosphate + an unfolded polypeptide.</text>
        <dbReference type="EC" id="5.6.1.7"/>
    </reaction>
</comment>
<comment type="subunit">
    <text evidence="1">Forms a cylinder of 14 subunits composed of two heptameric rings stacked back-to-back. Interacts with the co-chaperonin GroES.</text>
</comment>
<comment type="subcellular location">
    <subcellularLocation>
        <location evidence="1">Cytoplasm</location>
    </subcellularLocation>
</comment>
<comment type="similarity">
    <text evidence="1">Belongs to the chaperonin (HSP60) family.</text>
</comment>
<evidence type="ECO:0000255" key="1">
    <source>
        <dbReference type="HAMAP-Rule" id="MF_00600"/>
    </source>
</evidence>
<evidence type="ECO:0000256" key="2">
    <source>
        <dbReference type="SAM" id="MobiDB-lite"/>
    </source>
</evidence>
<feature type="chain" id="PRO_0000256886" description="Chaperonin GroEL 2">
    <location>
        <begin position="1"/>
        <end position="546"/>
    </location>
</feature>
<feature type="region of interest" description="Disordered" evidence="2">
    <location>
        <begin position="524"/>
        <end position="546"/>
    </location>
</feature>
<feature type="compositionally biased region" description="Gly residues" evidence="2">
    <location>
        <begin position="537"/>
        <end position="546"/>
    </location>
</feature>
<feature type="binding site" evidence="1">
    <location>
        <begin position="30"/>
        <end position="33"/>
    </location>
    <ligand>
        <name>ATP</name>
        <dbReference type="ChEBI" id="CHEBI:30616"/>
    </ligand>
</feature>
<feature type="binding site" evidence="1">
    <location>
        <position position="51"/>
    </location>
    <ligand>
        <name>ATP</name>
        <dbReference type="ChEBI" id="CHEBI:30616"/>
    </ligand>
</feature>
<feature type="binding site" evidence="1">
    <location>
        <begin position="87"/>
        <end position="91"/>
    </location>
    <ligand>
        <name>ATP</name>
        <dbReference type="ChEBI" id="CHEBI:30616"/>
    </ligand>
</feature>
<feature type="binding site" evidence="1">
    <location>
        <position position="415"/>
    </location>
    <ligand>
        <name>ATP</name>
        <dbReference type="ChEBI" id="CHEBI:30616"/>
    </ligand>
</feature>
<feature type="binding site" evidence="1">
    <location>
        <begin position="479"/>
        <end position="481"/>
    </location>
    <ligand>
        <name>ATP</name>
        <dbReference type="ChEBI" id="CHEBI:30616"/>
    </ligand>
</feature>
<feature type="binding site" evidence="1">
    <location>
        <position position="495"/>
    </location>
    <ligand>
        <name>ATP</name>
        <dbReference type="ChEBI" id="CHEBI:30616"/>
    </ligand>
</feature>
<sequence length="546" mass="57088">MAAKEIIFHDGARTKLVEGVNLLANAVKVTLGPKGRNVVLERSFGSPVVTKDGVSVAKEIELADKVQNIGAQLVKEVASKTSDAAGDGTTTATVLAQAIVREGQKYVAAGLNPLDLKRGIDKAVAAAVEELKKISKPTTTSKEIAQVATISANGEESIGQRIAEAIDRVGKEGVITVEDGKSLADELDVVEGLQFDRGYLSPYFINNPDRQLAVLDEPFILLHDKKISNIRDLLPVLEQVAKAGRPLLIVAEDVEGEALATLVVNNIRGTLKTVAVKAPGFGDRRKALLEDIAILTGGQVIAEETGLTLEKATLQELGRAKRIEVGKENTTLIDGAGDKPNIDARVKQIRAQIADATSDYDREKLQERVAKLAGGVAVIKVGGATEVEVKEKKDRVDDALHATRAAVEEGIVPGGGVALIRVKQAIAELTGANVDQKAGINIVLRALEEPLRQIVANAGEEASVVVATVAAGSGNYGYNAATGEYGDLVESGVLDPTKVTRTALQNAASIAGLLLTTDATVHEAPKDAPPAQPAGVPGAGGTGFDF</sequence>
<gene>
    <name evidence="1" type="primary">groEL2</name>
    <name evidence="1" type="synonym">groL2</name>
    <name type="ordered locus">BTH_II1938</name>
</gene>
<dbReference type="EC" id="5.6.1.7" evidence="1"/>
<dbReference type="EMBL" id="CP000085">
    <property type="protein sequence ID" value="ABC34732.1"/>
    <property type="molecule type" value="Genomic_DNA"/>
</dbReference>
<dbReference type="SMR" id="Q2T3W7"/>
<dbReference type="GeneID" id="45119361"/>
<dbReference type="KEGG" id="bte:BTH_II1938"/>
<dbReference type="HOGENOM" id="CLU_016503_3_0_4"/>
<dbReference type="Proteomes" id="UP000001930">
    <property type="component" value="Chromosome II"/>
</dbReference>
<dbReference type="GO" id="GO:0005737">
    <property type="term" value="C:cytoplasm"/>
    <property type="evidence" value="ECO:0007669"/>
    <property type="project" value="UniProtKB-SubCell"/>
</dbReference>
<dbReference type="GO" id="GO:0005524">
    <property type="term" value="F:ATP binding"/>
    <property type="evidence" value="ECO:0007669"/>
    <property type="project" value="UniProtKB-UniRule"/>
</dbReference>
<dbReference type="GO" id="GO:0140662">
    <property type="term" value="F:ATP-dependent protein folding chaperone"/>
    <property type="evidence" value="ECO:0007669"/>
    <property type="project" value="InterPro"/>
</dbReference>
<dbReference type="GO" id="GO:0016853">
    <property type="term" value="F:isomerase activity"/>
    <property type="evidence" value="ECO:0007669"/>
    <property type="project" value="UniProtKB-KW"/>
</dbReference>
<dbReference type="GO" id="GO:0051082">
    <property type="term" value="F:unfolded protein binding"/>
    <property type="evidence" value="ECO:0007669"/>
    <property type="project" value="UniProtKB-UniRule"/>
</dbReference>
<dbReference type="GO" id="GO:0042026">
    <property type="term" value="P:protein refolding"/>
    <property type="evidence" value="ECO:0007669"/>
    <property type="project" value="UniProtKB-UniRule"/>
</dbReference>
<dbReference type="CDD" id="cd03344">
    <property type="entry name" value="GroEL"/>
    <property type="match status" value="1"/>
</dbReference>
<dbReference type="FunFam" id="3.50.7.10:FF:000001">
    <property type="entry name" value="60 kDa chaperonin"/>
    <property type="match status" value="1"/>
</dbReference>
<dbReference type="Gene3D" id="3.50.7.10">
    <property type="entry name" value="GroEL"/>
    <property type="match status" value="1"/>
</dbReference>
<dbReference type="Gene3D" id="1.10.560.10">
    <property type="entry name" value="GroEL-like equatorial domain"/>
    <property type="match status" value="1"/>
</dbReference>
<dbReference type="Gene3D" id="3.30.260.10">
    <property type="entry name" value="TCP-1-like chaperonin intermediate domain"/>
    <property type="match status" value="1"/>
</dbReference>
<dbReference type="HAMAP" id="MF_00600">
    <property type="entry name" value="CH60"/>
    <property type="match status" value="1"/>
</dbReference>
<dbReference type="InterPro" id="IPR018370">
    <property type="entry name" value="Chaperonin_Cpn60_CS"/>
</dbReference>
<dbReference type="InterPro" id="IPR001844">
    <property type="entry name" value="Cpn60/GroEL"/>
</dbReference>
<dbReference type="InterPro" id="IPR002423">
    <property type="entry name" value="Cpn60/GroEL/TCP-1"/>
</dbReference>
<dbReference type="InterPro" id="IPR027409">
    <property type="entry name" value="GroEL-like_apical_dom_sf"/>
</dbReference>
<dbReference type="InterPro" id="IPR027413">
    <property type="entry name" value="GROEL-like_equatorial_sf"/>
</dbReference>
<dbReference type="InterPro" id="IPR027410">
    <property type="entry name" value="TCP-1-like_intermed_sf"/>
</dbReference>
<dbReference type="NCBIfam" id="TIGR02348">
    <property type="entry name" value="GroEL"/>
    <property type="match status" value="1"/>
</dbReference>
<dbReference type="NCBIfam" id="NF000592">
    <property type="entry name" value="PRK00013.1"/>
    <property type="match status" value="1"/>
</dbReference>
<dbReference type="NCBIfam" id="NF009487">
    <property type="entry name" value="PRK12849.1"/>
    <property type="match status" value="1"/>
</dbReference>
<dbReference type="NCBIfam" id="NF009488">
    <property type="entry name" value="PRK12850.1"/>
    <property type="match status" value="1"/>
</dbReference>
<dbReference type="NCBIfam" id="NF009489">
    <property type="entry name" value="PRK12851.1"/>
    <property type="match status" value="1"/>
</dbReference>
<dbReference type="PANTHER" id="PTHR45633">
    <property type="entry name" value="60 KDA HEAT SHOCK PROTEIN, MITOCHONDRIAL"/>
    <property type="match status" value="1"/>
</dbReference>
<dbReference type="Pfam" id="PF00118">
    <property type="entry name" value="Cpn60_TCP1"/>
    <property type="match status" value="1"/>
</dbReference>
<dbReference type="PRINTS" id="PR00298">
    <property type="entry name" value="CHAPERONIN60"/>
</dbReference>
<dbReference type="SUPFAM" id="SSF52029">
    <property type="entry name" value="GroEL apical domain-like"/>
    <property type="match status" value="1"/>
</dbReference>
<dbReference type="SUPFAM" id="SSF48592">
    <property type="entry name" value="GroEL equatorial domain-like"/>
    <property type="match status" value="1"/>
</dbReference>
<dbReference type="SUPFAM" id="SSF54849">
    <property type="entry name" value="GroEL-intermediate domain like"/>
    <property type="match status" value="1"/>
</dbReference>
<dbReference type="PROSITE" id="PS00296">
    <property type="entry name" value="CHAPERONINS_CPN60"/>
    <property type="match status" value="1"/>
</dbReference>
<reference key="1">
    <citation type="journal article" date="2005" name="BMC Genomics">
        <title>Bacterial genome adaptation to niches: divergence of the potential virulence genes in three Burkholderia species of different survival strategies.</title>
        <authorList>
            <person name="Kim H.S."/>
            <person name="Schell M.A."/>
            <person name="Yu Y."/>
            <person name="Ulrich R.L."/>
            <person name="Sarria S.H."/>
            <person name="Nierman W.C."/>
            <person name="DeShazer D."/>
        </authorList>
    </citation>
    <scope>NUCLEOTIDE SEQUENCE [LARGE SCALE GENOMIC DNA]</scope>
    <source>
        <strain>ATCC 700388 / DSM 13276 / CCUG 48851 / CIP 106301 / E264</strain>
    </source>
</reference>
<organism>
    <name type="scientific">Burkholderia thailandensis (strain ATCC 700388 / DSM 13276 / CCUG 48851 / CIP 106301 / E264)</name>
    <dbReference type="NCBI Taxonomy" id="271848"/>
    <lineage>
        <taxon>Bacteria</taxon>
        <taxon>Pseudomonadati</taxon>
        <taxon>Pseudomonadota</taxon>
        <taxon>Betaproteobacteria</taxon>
        <taxon>Burkholderiales</taxon>
        <taxon>Burkholderiaceae</taxon>
        <taxon>Burkholderia</taxon>
        <taxon>pseudomallei group</taxon>
    </lineage>
</organism>
<name>CH602_BURTA</name>
<keyword id="KW-0067">ATP-binding</keyword>
<keyword id="KW-0143">Chaperone</keyword>
<keyword id="KW-0963">Cytoplasm</keyword>
<keyword id="KW-0413">Isomerase</keyword>
<keyword id="KW-0547">Nucleotide-binding</keyword>